<proteinExistence type="evidence at protein level"/>
<organism>
    <name type="scientific">Mus musculus</name>
    <name type="common">Mouse</name>
    <dbReference type="NCBI Taxonomy" id="10090"/>
    <lineage>
        <taxon>Eukaryota</taxon>
        <taxon>Metazoa</taxon>
        <taxon>Chordata</taxon>
        <taxon>Craniata</taxon>
        <taxon>Vertebrata</taxon>
        <taxon>Euteleostomi</taxon>
        <taxon>Mammalia</taxon>
        <taxon>Eutheria</taxon>
        <taxon>Euarchontoglires</taxon>
        <taxon>Glires</taxon>
        <taxon>Rodentia</taxon>
        <taxon>Myomorpha</taxon>
        <taxon>Muroidea</taxon>
        <taxon>Muridae</taxon>
        <taxon>Murinae</taxon>
        <taxon>Mus</taxon>
        <taxon>Mus</taxon>
    </lineage>
</organism>
<gene>
    <name type="primary">Atad2</name>
</gene>
<name>ATAD2_MOUSE</name>
<comment type="function">
    <text evidence="1">May be a transcriptional coactivator of the nuclear receptor ESR1 required to induce the expression of a subset of estradiol target genes, such as CCND1, MYC and E2F1. May play a role in the recruitment or occupancy of CREBBP at some ESR1 target gene promoters. May be required for histone hyperacetylation (By similarity).</text>
</comment>
<comment type="catalytic activity">
    <reaction>
        <text>ATP + H2O = ADP + phosphate + H(+)</text>
        <dbReference type="Rhea" id="RHEA:13065"/>
        <dbReference type="ChEBI" id="CHEBI:15377"/>
        <dbReference type="ChEBI" id="CHEBI:15378"/>
        <dbReference type="ChEBI" id="CHEBI:30616"/>
        <dbReference type="ChEBI" id="CHEBI:43474"/>
        <dbReference type="ChEBI" id="CHEBI:456216"/>
    </reaction>
</comment>
<comment type="subunit">
    <text evidence="1">Interacts with ESR1 and NCOA3 and these interactions are enhanced by estradiol. Interacts with acetylated lysine residues on histone H1.4, H2A, H2B and H3 (in vitro) (By similarity).</text>
</comment>
<comment type="interaction">
    <interactant intactId="EBI-2944582">
        <id>Q8CDM1</id>
    </interactant>
    <interactant intactId="EBI-299632">
        <id>P62806</id>
        <label>H4c1</label>
    </interactant>
    <organismsDiffer>false</organismsDiffer>
    <experiments>2</experiments>
</comment>
<comment type="subcellular location">
    <subcellularLocation>
        <location evidence="1">Nucleus</location>
    </subcellularLocation>
</comment>
<comment type="alternative products">
    <event type="alternative splicing"/>
    <isoform>
        <id>Q8CDM1-1</id>
        <name>1</name>
        <sequence type="displayed"/>
    </isoform>
    <isoform>
        <id>Q8CDM1-2</id>
        <name>2</name>
        <sequence type="described" ref="VSP_035804 VSP_035805 VSP_035806 VSP_035807"/>
    </isoform>
</comment>
<comment type="similarity">
    <text evidence="7">Belongs to the AAA ATPase family.</text>
</comment>
<feature type="chain" id="PRO_0000084797" description="ATPase family AAA domain-containing protein 2">
    <location>
        <begin position="1"/>
        <end position="1040"/>
    </location>
</feature>
<feature type="domain" description="Bromo" evidence="4">
    <location>
        <begin position="629"/>
        <end position="741"/>
    </location>
</feature>
<feature type="region of interest" description="Disordered" evidence="5">
    <location>
        <begin position="1"/>
        <end position="30"/>
    </location>
</feature>
<feature type="region of interest" description="Disordered" evidence="5">
    <location>
        <begin position="772"/>
        <end position="799"/>
    </location>
</feature>
<feature type="region of interest" description="Disordered" evidence="5">
    <location>
        <begin position="811"/>
        <end position="935"/>
    </location>
</feature>
<feature type="coiled-coil region" evidence="3">
    <location>
        <begin position="619"/>
        <end position="643"/>
    </location>
</feature>
<feature type="coiled-coil region" evidence="3">
    <location>
        <begin position="735"/>
        <end position="761"/>
    </location>
</feature>
<feature type="compositionally biased region" description="Basic residues" evidence="5">
    <location>
        <begin position="1"/>
        <end position="11"/>
    </location>
</feature>
<feature type="compositionally biased region" description="Basic and acidic residues" evidence="5">
    <location>
        <begin position="784"/>
        <end position="797"/>
    </location>
</feature>
<feature type="compositionally biased region" description="Basic residues" evidence="5">
    <location>
        <begin position="811"/>
        <end position="833"/>
    </location>
</feature>
<feature type="compositionally biased region" description="Polar residues" evidence="5">
    <location>
        <begin position="835"/>
        <end position="848"/>
    </location>
</feature>
<feature type="compositionally biased region" description="Basic and acidic residues" evidence="5">
    <location>
        <begin position="849"/>
        <end position="863"/>
    </location>
</feature>
<feature type="compositionally biased region" description="Basic and acidic residues" evidence="5">
    <location>
        <begin position="874"/>
        <end position="885"/>
    </location>
</feature>
<feature type="compositionally biased region" description="Basic and acidic residues" evidence="5">
    <location>
        <begin position="901"/>
        <end position="919"/>
    </location>
</feature>
<feature type="binding site" evidence="3">
    <location>
        <begin position="122"/>
        <end position="129"/>
    </location>
    <ligand>
        <name>ATP</name>
        <dbReference type="ChEBI" id="CHEBI:30616"/>
    </ligand>
</feature>
<feature type="modified residue" description="Phosphoserine" evidence="2">
    <location>
        <position position="65"/>
    </location>
</feature>
<feature type="modified residue" description="Phosphoserine" evidence="2">
    <location>
        <position position="401"/>
    </location>
</feature>
<feature type="modified residue" description="Phosphoserine" evidence="2">
    <location>
        <position position="406"/>
    </location>
</feature>
<feature type="modified residue" description="Phosphothreonine" evidence="8">
    <location>
        <position position="801"/>
    </location>
</feature>
<feature type="modified residue" description="Phosphothreonine" evidence="2">
    <location>
        <position position="825"/>
    </location>
</feature>
<feature type="modified residue" description="Phosphoserine" evidence="2">
    <location>
        <position position="849"/>
    </location>
</feature>
<feature type="modified residue" description="Phosphoserine" evidence="8">
    <location>
        <position position="883"/>
    </location>
</feature>
<feature type="modified residue" description="Phosphoserine" evidence="2">
    <location>
        <position position="891"/>
    </location>
</feature>
<feature type="modified residue" description="Phosphoserine" evidence="2">
    <location>
        <position position="951"/>
    </location>
</feature>
<feature type="modified residue" description="Phosphothreonine" evidence="2">
    <location>
        <position position="972"/>
    </location>
</feature>
<feature type="cross-link" description="Glycyl lysine isopeptide (Lys-Gly) (interchain with G-Cter in SUMO2)" evidence="2">
    <location>
        <position position="777"/>
    </location>
</feature>
<feature type="cross-link" description="Glycyl lysine isopeptide (Lys-Gly) (interchain with G-Cter in SUMO2)" evidence="2">
    <location>
        <position position="797"/>
    </location>
</feature>
<feature type="splice variant" id="VSP_035804" description="In isoform 2." evidence="6">
    <location>
        <begin position="1"/>
        <end position="201"/>
    </location>
</feature>
<feature type="splice variant" id="VSP_035805" description="In isoform 2." evidence="6">
    <original>IH</original>
    <variation>MF</variation>
    <location>
        <begin position="202"/>
        <end position="203"/>
    </location>
</feature>
<feature type="splice variant" id="VSP_035806" description="In isoform 2." evidence="6">
    <original>V</original>
    <variation>G</variation>
    <location>
        <position position="601"/>
    </location>
</feature>
<feature type="splice variant" id="VSP_035807" description="In isoform 2." evidence="6">
    <location>
        <begin position="602"/>
        <end position="1040"/>
    </location>
</feature>
<accession>Q8CDM1</accession>
<accession>Q3UYW6</accession>
<keyword id="KW-0010">Activator</keyword>
<keyword id="KW-0025">Alternative splicing</keyword>
<keyword id="KW-0067">ATP-binding</keyword>
<keyword id="KW-0103">Bromodomain</keyword>
<keyword id="KW-0175">Coiled coil</keyword>
<keyword id="KW-0378">Hydrolase</keyword>
<keyword id="KW-1017">Isopeptide bond</keyword>
<keyword id="KW-0547">Nucleotide-binding</keyword>
<keyword id="KW-0539">Nucleus</keyword>
<keyword id="KW-0597">Phosphoprotein</keyword>
<keyword id="KW-1185">Reference proteome</keyword>
<keyword id="KW-0804">Transcription</keyword>
<keyword id="KW-0805">Transcription regulation</keyword>
<keyword id="KW-0832">Ubl conjugation</keyword>
<protein>
    <recommendedName>
        <fullName>ATPase family AAA domain-containing protein 2</fullName>
        <ecNumber>3.6.1.-</ecNumber>
    </recommendedName>
</protein>
<reference key="1">
    <citation type="journal article" date="2005" name="Science">
        <title>The transcriptional landscape of the mammalian genome.</title>
        <authorList>
            <person name="Carninci P."/>
            <person name="Kasukawa T."/>
            <person name="Katayama S."/>
            <person name="Gough J."/>
            <person name="Frith M.C."/>
            <person name="Maeda N."/>
            <person name="Oyama R."/>
            <person name="Ravasi T."/>
            <person name="Lenhard B."/>
            <person name="Wells C."/>
            <person name="Kodzius R."/>
            <person name="Shimokawa K."/>
            <person name="Bajic V.B."/>
            <person name="Brenner S.E."/>
            <person name="Batalov S."/>
            <person name="Forrest A.R."/>
            <person name="Zavolan M."/>
            <person name="Davis M.J."/>
            <person name="Wilming L.G."/>
            <person name="Aidinis V."/>
            <person name="Allen J.E."/>
            <person name="Ambesi-Impiombato A."/>
            <person name="Apweiler R."/>
            <person name="Aturaliya R.N."/>
            <person name="Bailey T.L."/>
            <person name="Bansal M."/>
            <person name="Baxter L."/>
            <person name="Beisel K.W."/>
            <person name="Bersano T."/>
            <person name="Bono H."/>
            <person name="Chalk A.M."/>
            <person name="Chiu K.P."/>
            <person name="Choudhary V."/>
            <person name="Christoffels A."/>
            <person name="Clutterbuck D.R."/>
            <person name="Crowe M.L."/>
            <person name="Dalla E."/>
            <person name="Dalrymple B.P."/>
            <person name="de Bono B."/>
            <person name="Della Gatta G."/>
            <person name="di Bernardo D."/>
            <person name="Down T."/>
            <person name="Engstrom P."/>
            <person name="Fagiolini M."/>
            <person name="Faulkner G."/>
            <person name="Fletcher C.F."/>
            <person name="Fukushima T."/>
            <person name="Furuno M."/>
            <person name="Futaki S."/>
            <person name="Gariboldi M."/>
            <person name="Georgii-Hemming P."/>
            <person name="Gingeras T.R."/>
            <person name="Gojobori T."/>
            <person name="Green R.E."/>
            <person name="Gustincich S."/>
            <person name="Harbers M."/>
            <person name="Hayashi Y."/>
            <person name="Hensch T.K."/>
            <person name="Hirokawa N."/>
            <person name="Hill D."/>
            <person name="Huminiecki L."/>
            <person name="Iacono M."/>
            <person name="Ikeo K."/>
            <person name="Iwama A."/>
            <person name="Ishikawa T."/>
            <person name="Jakt M."/>
            <person name="Kanapin A."/>
            <person name="Katoh M."/>
            <person name="Kawasawa Y."/>
            <person name="Kelso J."/>
            <person name="Kitamura H."/>
            <person name="Kitano H."/>
            <person name="Kollias G."/>
            <person name="Krishnan S.P."/>
            <person name="Kruger A."/>
            <person name="Kummerfeld S.K."/>
            <person name="Kurochkin I.V."/>
            <person name="Lareau L.F."/>
            <person name="Lazarevic D."/>
            <person name="Lipovich L."/>
            <person name="Liu J."/>
            <person name="Liuni S."/>
            <person name="McWilliam S."/>
            <person name="Madan Babu M."/>
            <person name="Madera M."/>
            <person name="Marchionni L."/>
            <person name="Matsuda H."/>
            <person name="Matsuzawa S."/>
            <person name="Miki H."/>
            <person name="Mignone F."/>
            <person name="Miyake S."/>
            <person name="Morris K."/>
            <person name="Mottagui-Tabar S."/>
            <person name="Mulder N."/>
            <person name="Nakano N."/>
            <person name="Nakauchi H."/>
            <person name="Ng P."/>
            <person name="Nilsson R."/>
            <person name="Nishiguchi S."/>
            <person name="Nishikawa S."/>
            <person name="Nori F."/>
            <person name="Ohara O."/>
            <person name="Okazaki Y."/>
            <person name="Orlando V."/>
            <person name="Pang K.C."/>
            <person name="Pavan W.J."/>
            <person name="Pavesi G."/>
            <person name="Pesole G."/>
            <person name="Petrovsky N."/>
            <person name="Piazza S."/>
            <person name="Reed J."/>
            <person name="Reid J.F."/>
            <person name="Ring B.Z."/>
            <person name="Ringwald M."/>
            <person name="Rost B."/>
            <person name="Ruan Y."/>
            <person name="Salzberg S.L."/>
            <person name="Sandelin A."/>
            <person name="Schneider C."/>
            <person name="Schoenbach C."/>
            <person name="Sekiguchi K."/>
            <person name="Semple C.A."/>
            <person name="Seno S."/>
            <person name="Sessa L."/>
            <person name="Sheng Y."/>
            <person name="Shibata Y."/>
            <person name="Shimada H."/>
            <person name="Shimada K."/>
            <person name="Silva D."/>
            <person name="Sinclair B."/>
            <person name="Sperling S."/>
            <person name="Stupka E."/>
            <person name="Sugiura K."/>
            <person name="Sultana R."/>
            <person name="Takenaka Y."/>
            <person name="Taki K."/>
            <person name="Tammoja K."/>
            <person name="Tan S.L."/>
            <person name="Tang S."/>
            <person name="Taylor M.S."/>
            <person name="Tegner J."/>
            <person name="Teichmann S.A."/>
            <person name="Ueda H.R."/>
            <person name="van Nimwegen E."/>
            <person name="Verardo R."/>
            <person name="Wei C.L."/>
            <person name="Yagi K."/>
            <person name="Yamanishi H."/>
            <person name="Zabarovsky E."/>
            <person name="Zhu S."/>
            <person name="Zimmer A."/>
            <person name="Hide W."/>
            <person name="Bult C."/>
            <person name="Grimmond S.M."/>
            <person name="Teasdale R.D."/>
            <person name="Liu E.T."/>
            <person name="Brusic V."/>
            <person name="Quackenbush J."/>
            <person name="Wahlestedt C."/>
            <person name="Mattick J.S."/>
            <person name="Hume D.A."/>
            <person name="Kai C."/>
            <person name="Sasaki D."/>
            <person name="Tomaru Y."/>
            <person name="Fukuda S."/>
            <person name="Kanamori-Katayama M."/>
            <person name="Suzuki M."/>
            <person name="Aoki J."/>
            <person name="Arakawa T."/>
            <person name="Iida J."/>
            <person name="Imamura K."/>
            <person name="Itoh M."/>
            <person name="Kato T."/>
            <person name="Kawaji H."/>
            <person name="Kawagashira N."/>
            <person name="Kawashima T."/>
            <person name="Kojima M."/>
            <person name="Kondo S."/>
            <person name="Konno H."/>
            <person name="Nakano K."/>
            <person name="Ninomiya N."/>
            <person name="Nishio T."/>
            <person name="Okada M."/>
            <person name="Plessy C."/>
            <person name="Shibata K."/>
            <person name="Shiraki T."/>
            <person name="Suzuki S."/>
            <person name="Tagami M."/>
            <person name="Waki K."/>
            <person name="Watahiki A."/>
            <person name="Okamura-Oho Y."/>
            <person name="Suzuki H."/>
            <person name="Kawai J."/>
            <person name="Hayashizaki Y."/>
        </authorList>
    </citation>
    <scope>NUCLEOTIDE SEQUENCE [LARGE SCALE MRNA] (ISOFORMS 1 AND 2)</scope>
    <source>
        <strain>C57BL/6J</strain>
        <tissue>Testis</tissue>
    </source>
</reference>
<reference key="2">
    <citation type="journal article" date="2010" name="Cell">
        <title>A tissue-specific atlas of mouse protein phosphorylation and expression.</title>
        <authorList>
            <person name="Huttlin E.L."/>
            <person name="Jedrychowski M.P."/>
            <person name="Elias J.E."/>
            <person name="Goswami T."/>
            <person name="Rad R."/>
            <person name="Beausoleil S.A."/>
            <person name="Villen J."/>
            <person name="Haas W."/>
            <person name="Sowa M.E."/>
            <person name="Gygi S.P."/>
        </authorList>
    </citation>
    <scope>PHOSPHORYLATION [LARGE SCALE ANALYSIS] AT THR-801 AND SER-883</scope>
    <scope>IDENTIFICATION BY MASS SPECTROMETRY [LARGE SCALE ANALYSIS]</scope>
    <source>
        <tissue>Spleen</tissue>
        <tissue>Testis</tissue>
    </source>
</reference>
<sequence length="1040" mass="117943">MSLLKMRRHAIHSSDSTSSSSSEDDCFERRTKRNRNRAINRCLPLNFRKDEIRGIYKDRMKIGASLADVDPMQLDTSVRFDSVGGLSSHIAALKEMVVFPLLYPEVFEKFKIQPPRGCLFYGPPGTGKTLVARALANECSRGDKRVAFFMRKGADCLSKWVGESERQLRLLFDQAYQMRPAIIFFDEIDGLAPVRSSRQDQIHSSIVSTLLALMDGLDSRGEIVVIGATNRLDSIDPALRRPGRFDREFLFSLPDKNARKEILKIHTRDWNPKPVDMFLEELAEHCVGYCGADIKSICAEAALCALRRRYPQIYTTSEKLQLDLSSITISAKDFEAALQKIRPASQRAVTSPGQALSAIVKPLLQNTVHRILDALQKVFPHVEVGTNKSLNSDVSCPFLESDLAYSDDDTPSVYENGLSQKENLNFLHLNRNACYQPMSFRPRLLIVGEPGFGQSSHLAPAVIHALEKFTVYTLDIPVLFGISTTSPEEACSQMIREAKRTAPSIVYVPHIHLWWEIVGPTLKATFTTLLQTIPSFAPVLLLATSEKPYSALPEEVQELFTHDYGEIFNVQLPDKEERTKFFEDLILKQASKPPVSQKKAVLQALEVLPVAPPPEPRPLTAEEVKRLEEQEEDTFRELRIFLRNVTHRLAIDKRFRVFTKPVDPDEVPDYVTVIKQPMDLSSVISKIDLHKYLTVKDYLKDIDLICSNALEYNPDRDPGDRLIRHRACALRDTAYAIIKEELDEDFEQLCEEIQESRKKRGCSSSKYAPSYYHVMPKQNSPPVGDKKPDQEQNEKLKVPCTPVACSTPAQLKRKFHKKSKWHVGTKIKRRKISQAKDNSLNAMNSSSRSDTEDSQHTHAEHTEPGNTDESSVEESDKQNRLESNIDLKNNSSSSNIENELEEPKETTEGTELRKDRIVCRGDASASQVTDIPEDSESKEMDFLRMTLARGSQVEQQELISMEQALAILSQPTPSLVLDHKQLTNILKTVVKKSQKYNIFQLENLYAVISQCIYEHRRDYDKTALVQKMEQAVENFNCSRS</sequence>
<dbReference type="EC" id="3.6.1.-"/>
<dbReference type="EMBL" id="AK029867">
    <property type="protein sequence ID" value="BAC26651.1"/>
    <property type="molecule type" value="mRNA"/>
</dbReference>
<dbReference type="EMBL" id="AK134319">
    <property type="protein sequence ID" value="BAE22095.1"/>
    <property type="molecule type" value="mRNA"/>
</dbReference>
<dbReference type="RefSeq" id="NP_001391694.1">
    <molecule id="Q8CDM1-1"/>
    <property type="nucleotide sequence ID" value="NM_001404765.1"/>
</dbReference>
<dbReference type="RefSeq" id="NP_081711.2">
    <property type="nucleotide sequence ID" value="NM_027435.2"/>
</dbReference>
<dbReference type="SMR" id="Q8CDM1"/>
<dbReference type="BioGRID" id="214078">
    <property type="interactions" value="2"/>
</dbReference>
<dbReference type="FunCoup" id="Q8CDM1">
    <property type="interactions" value="3918"/>
</dbReference>
<dbReference type="IntAct" id="Q8CDM1">
    <property type="interactions" value="2"/>
</dbReference>
<dbReference type="MINT" id="Q8CDM1"/>
<dbReference type="STRING" id="10090.ENSMUSP00000043691"/>
<dbReference type="GlyGen" id="Q8CDM1">
    <property type="glycosylation" value="2 sites, 1 O-linked glycan (1 site)"/>
</dbReference>
<dbReference type="iPTMnet" id="Q8CDM1"/>
<dbReference type="PhosphoSitePlus" id="Q8CDM1"/>
<dbReference type="jPOST" id="Q8CDM1"/>
<dbReference type="PaxDb" id="10090-ENSMUSP00000043691"/>
<dbReference type="PeptideAtlas" id="Q8CDM1"/>
<dbReference type="ProteomicsDB" id="265137">
    <molecule id="Q8CDM1-1"/>
</dbReference>
<dbReference type="ProteomicsDB" id="265138">
    <molecule id="Q8CDM1-2"/>
</dbReference>
<dbReference type="Pumba" id="Q8CDM1"/>
<dbReference type="DNASU" id="70472"/>
<dbReference type="Ensembl" id="ENSMUST00000228783.2">
    <molecule id="Q8CDM1-1"/>
    <property type="protein sequence ID" value="ENSMUSP00000153936.2"/>
    <property type="gene ID" value="ENSMUSG00000022360.9"/>
</dbReference>
<dbReference type="GeneID" id="70472"/>
<dbReference type="KEGG" id="mmu:70472"/>
<dbReference type="UCSC" id="uc007vtg.1">
    <molecule id="Q8CDM1-2"/>
    <property type="organism name" value="mouse"/>
</dbReference>
<dbReference type="AGR" id="MGI:1917722"/>
<dbReference type="CTD" id="29028"/>
<dbReference type="MGI" id="MGI:1917722">
    <property type="gene designation" value="Atad2"/>
</dbReference>
<dbReference type="VEuPathDB" id="HostDB:ENSMUSG00000022360"/>
<dbReference type="eggNOG" id="KOG0732">
    <property type="taxonomic scope" value="Eukaryota"/>
</dbReference>
<dbReference type="GeneTree" id="ENSGT00940000165417"/>
<dbReference type="InParanoid" id="Q8CDM1"/>
<dbReference type="OrthoDB" id="5421at2759"/>
<dbReference type="PhylomeDB" id="Q8CDM1"/>
<dbReference type="Reactome" id="R-MMU-8866910">
    <property type="pathway name" value="TFAP2 (AP-2) family regulates transcription of growth factors and their receptors"/>
</dbReference>
<dbReference type="BioGRID-ORCS" id="70472">
    <property type="hits" value="1 hit in 84 CRISPR screens"/>
</dbReference>
<dbReference type="ChiTaRS" id="Atad2">
    <property type="organism name" value="mouse"/>
</dbReference>
<dbReference type="PRO" id="PR:Q8CDM1"/>
<dbReference type="Proteomes" id="UP000000589">
    <property type="component" value="Chromosome 15"/>
</dbReference>
<dbReference type="RNAct" id="Q8CDM1">
    <property type="molecule type" value="protein"/>
</dbReference>
<dbReference type="Bgee" id="ENSMUSG00000022360">
    <property type="expression patterns" value="Expressed in embryonic post-anal tail and 71 other cell types or tissues"/>
</dbReference>
<dbReference type="ExpressionAtlas" id="Q8CDM1">
    <property type="expression patterns" value="baseline and differential"/>
</dbReference>
<dbReference type="GO" id="GO:0005654">
    <property type="term" value="C:nucleoplasm"/>
    <property type="evidence" value="ECO:0007669"/>
    <property type="project" value="Ensembl"/>
</dbReference>
<dbReference type="GO" id="GO:0005524">
    <property type="term" value="F:ATP binding"/>
    <property type="evidence" value="ECO:0007669"/>
    <property type="project" value="UniProtKB-KW"/>
</dbReference>
<dbReference type="GO" id="GO:0016887">
    <property type="term" value="F:ATP hydrolysis activity"/>
    <property type="evidence" value="ECO:0007669"/>
    <property type="project" value="Ensembl"/>
</dbReference>
<dbReference type="GO" id="GO:0045893">
    <property type="term" value="P:positive regulation of DNA-templated transcription"/>
    <property type="evidence" value="ECO:0007669"/>
    <property type="project" value="Ensembl"/>
</dbReference>
<dbReference type="CDD" id="cd05528">
    <property type="entry name" value="Bromo_AAA"/>
    <property type="match status" value="1"/>
</dbReference>
<dbReference type="CDD" id="cd19517">
    <property type="entry name" value="RecA-like_Yta7-like"/>
    <property type="match status" value="1"/>
</dbReference>
<dbReference type="FunFam" id="1.20.920.10:FF:000021">
    <property type="entry name" value="ATPase family AAA domain-containing protein 2"/>
    <property type="match status" value="1"/>
</dbReference>
<dbReference type="FunFam" id="1.10.8.60:FF:000016">
    <property type="entry name" value="ATPase family AAA domain-containing protein 2B"/>
    <property type="match status" value="1"/>
</dbReference>
<dbReference type="FunFam" id="3.40.50.300:FF:000734">
    <property type="entry name" value="ATPase family, AAA domain containing 2"/>
    <property type="match status" value="1"/>
</dbReference>
<dbReference type="FunFam" id="3.40.50.300:FF:000061">
    <property type="entry name" value="ATPase family, AAA domain-containing 2"/>
    <property type="match status" value="1"/>
</dbReference>
<dbReference type="Gene3D" id="1.10.8.60">
    <property type="match status" value="1"/>
</dbReference>
<dbReference type="Gene3D" id="1.20.920.10">
    <property type="entry name" value="Bromodomain-like"/>
    <property type="match status" value="1"/>
</dbReference>
<dbReference type="Gene3D" id="3.40.50.300">
    <property type="entry name" value="P-loop containing nucleotide triphosphate hydrolases"/>
    <property type="match status" value="2"/>
</dbReference>
<dbReference type="InterPro" id="IPR003593">
    <property type="entry name" value="AAA+_ATPase"/>
</dbReference>
<dbReference type="InterPro" id="IPR041569">
    <property type="entry name" value="AAA_lid_3"/>
</dbReference>
<dbReference type="InterPro" id="IPR045199">
    <property type="entry name" value="ATAD2-like"/>
</dbReference>
<dbReference type="InterPro" id="IPR003959">
    <property type="entry name" value="ATPase_AAA_core"/>
</dbReference>
<dbReference type="InterPro" id="IPR003960">
    <property type="entry name" value="ATPase_AAA_CS"/>
</dbReference>
<dbReference type="InterPro" id="IPR001487">
    <property type="entry name" value="Bromodomain"/>
</dbReference>
<dbReference type="InterPro" id="IPR036427">
    <property type="entry name" value="Bromodomain-like_sf"/>
</dbReference>
<dbReference type="InterPro" id="IPR027417">
    <property type="entry name" value="P-loop_NTPase"/>
</dbReference>
<dbReference type="PANTHER" id="PTHR23069">
    <property type="entry name" value="AAA DOMAIN-CONTAINING"/>
    <property type="match status" value="1"/>
</dbReference>
<dbReference type="PANTHER" id="PTHR23069:SF4">
    <property type="entry name" value="ATPASE FAMILY AAA DOMAIN-CONTAINING PROTEIN 2"/>
    <property type="match status" value="1"/>
</dbReference>
<dbReference type="Pfam" id="PF00004">
    <property type="entry name" value="AAA"/>
    <property type="match status" value="1"/>
</dbReference>
<dbReference type="Pfam" id="PF17862">
    <property type="entry name" value="AAA_lid_3"/>
    <property type="match status" value="1"/>
</dbReference>
<dbReference type="Pfam" id="PF00439">
    <property type="entry name" value="Bromodomain"/>
    <property type="match status" value="1"/>
</dbReference>
<dbReference type="PRINTS" id="PR00503">
    <property type="entry name" value="BROMODOMAIN"/>
</dbReference>
<dbReference type="SMART" id="SM00382">
    <property type="entry name" value="AAA"/>
    <property type="match status" value="1"/>
</dbReference>
<dbReference type="SMART" id="SM00297">
    <property type="entry name" value="BROMO"/>
    <property type="match status" value="1"/>
</dbReference>
<dbReference type="SUPFAM" id="SSF47370">
    <property type="entry name" value="Bromodomain"/>
    <property type="match status" value="1"/>
</dbReference>
<dbReference type="SUPFAM" id="SSF52540">
    <property type="entry name" value="P-loop containing nucleoside triphosphate hydrolases"/>
    <property type="match status" value="2"/>
</dbReference>
<dbReference type="PROSITE" id="PS00674">
    <property type="entry name" value="AAA"/>
    <property type="match status" value="1"/>
</dbReference>
<dbReference type="PROSITE" id="PS50014">
    <property type="entry name" value="BROMODOMAIN_2"/>
    <property type="match status" value="1"/>
</dbReference>
<evidence type="ECO:0000250" key="1"/>
<evidence type="ECO:0000250" key="2">
    <source>
        <dbReference type="UniProtKB" id="Q6PL18"/>
    </source>
</evidence>
<evidence type="ECO:0000255" key="3"/>
<evidence type="ECO:0000255" key="4">
    <source>
        <dbReference type="PROSITE-ProRule" id="PRU00035"/>
    </source>
</evidence>
<evidence type="ECO:0000256" key="5">
    <source>
        <dbReference type="SAM" id="MobiDB-lite"/>
    </source>
</evidence>
<evidence type="ECO:0000303" key="6">
    <source>
    </source>
</evidence>
<evidence type="ECO:0000305" key="7"/>
<evidence type="ECO:0007744" key="8">
    <source>
    </source>
</evidence>